<name>BECN1_PIG</name>
<keyword id="KW-0002">3D-structure</keyword>
<keyword id="KW-0007">Acetylation</keyword>
<keyword id="KW-0051">Antiviral defense</keyword>
<keyword id="KW-0053">Apoptosis</keyword>
<keyword id="KW-0072">Autophagy</keyword>
<keyword id="KW-0131">Cell cycle</keyword>
<keyword id="KW-0132">Cell division</keyword>
<keyword id="KW-0175">Coiled coil</keyword>
<keyword id="KW-0963">Cytoplasm</keyword>
<keyword id="KW-0968">Cytoplasmic vesicle</keyword>
<keyword id="KW-0256">Endoplasmic reticulum</keyword>
<keyword id="KW-0967">Endosome</keyword>
<keyword id="KW-0333">Golgi apparatus</keyword>
<keyword id="KW-0945">Host-virus interaction</keyword>
<keyword id="KW-1017">Isopeptide bond</keyword>
<keyword id="KW-0472">Membrane</keyword>
<keyword id="KW-0496">Mitochondrion</keyword>
<keyword id="KW-0539">Nucleus</keyword>
<keyword id="KW-0597">Phosphoprotein</keyword>
<keyword id="KW-1185">Reference proteome</keyword>
<keyword id="KW-0832">Ubl conjugation</keyword>
<comment type="function">
    <text evidence="1 2 3">Plays a central role in autophagy. Acts as a core subunit of the PI3K complex that mediates formation of phosphatidylinositol 3-phosphate; different complex forms are believed to play a role in multiple membrane trafficking pathways: PI3KC3-C1 is involved in initiation of autophagosomes and PI3KC3-C2 in maturation of autophagosomes and endocytosis. Involved in regulation of degradative endocytic trafficking and required for the abscission step in cytokinesis, probably in the context of PI3KC3-C2. Essential for the formation of PI3KC3-C2 but not PI3KC3-C1 PI3K complex forms. Involved in endocytosis. May play a role in antiviral host defense (By similarity).</text>
</comment>
<comment type="function">
    <text evidence="1 2">Beclin-1-C 35 kDa localized to mitochondria can promote apoptosis; it induces the mitochondrial translocation of BAX and the release of proapoptotic factors.</text>
</comment>
<comment type="subunit">
    <text evidence="1 2 3">A homodimeric form is proposed to exist; this metastable form readily transits to ATG14- or UVRAG-containing complexes with BECN1:UVRAG being more stable than BECN1:ATG14 (By similarity). Component of the PI3K (PI3KC3/PI3K-III/class III phosphatidylinositol 3-kinase) complex the core of which is composed of the catalytic subunit PIK3C3, the regulatory subunit PIK3R4 and BECN1 associating with additional regulatory/auxiliary subunits to form alternative complex forms. Alternative complex forms containing a fourth regulatory subunit in a mutually exclusive manner are PI3K complex I (PI3KC3-C1) containing ATG14, and PI3K complex II (PI3KC3-C2) containing UVRAG. PI3KC3-C1 displays a V-shaped architecture with PIK3R4 serving as a bridge between PIK3C3 and the ATG14:BECN1 subcomplex. Both, PI3KC3-C1 and PI3KC3-C2, can associate with further regulatory subunits, such as RUBCN, SH3GLB1/Bif-1 and AMBRA1 (By similarity). PI3KC3-C1 probably associates with PIK3CB (By similarity). Forms a complex with PPP2CA and AMBRA1; AMBRA1 and BECN1 components of the complex regulate MYC stability via different pathways. Component of the complex, at least composed of LRPPRC, BECN1 and BCL2; the interactions prevent BECN1 from forming an autophagy-inducing complex with PIK3C3 (By similarity). Interacts with AMBRA1, GOPC, GRID2 (By similarity). Interacts with BCL2 and BCL2L1 isoform Bcl-X(L); the interaction inhibits BECN1 function in promoting autophagy by interfering with the formation of the PI3K complex. Interacts with cytosolic HMGB1; inhibits the interaction of BECN1 and BCL2 leading to promotion of autophagy. Interacts with USP10, USP13, VMP1, DAPK1, RAB39A. Interacts with the poly-Gln domain of ATXN3; the interaction causes deubiquitination at Lys-400 and stabilizes BECN1. Interacts with SLAMF1. Interacts with TRIM5; the interaction causes activation of BECN1 by causing its dissociation from its inhibitors BCL2 and TAB2. Interacts with active ULK1 (phosphorylated on 'Ser-317') and MEFV simultaneously. Interacts with WDR81 and WDR91; negatively regulates the PI3 kinase/PI3K activity associated with endosomal membranes. Interacts with LAPTM4B; competes with EGFR for LAPTM4B binding; regulates EGFR activity. Interacts with TRIM50. Interacts with TRIM16. Interacts with ATG14; this interaction is increased in the absence of TMEM39A (By similarity). Interacts with WASHC1; preventing interaction with AMBRA1 and the DCX(AMBRA1) complex and subsequent ubiquitination (By similarity). Interacts with TRIM17 (By similarity). Interacts with BCL2L10/BCL-B (via BH1 domain) (By similarity). Interacts with SH3BGRL (By similarity). Interacts with IRGM; enhancing BECN1-interacting partners and influencing the composition of the BECN1 complex (By similarity). Interacts with ARMC3 (By similarity). Interacts with LRPPRC (By similarity).</text>
</comment>
<comment type="subunit">
    <text evidence="5 6">(Microbial infection) Interacts with African swine fever virus (ASFV) apoptosis regulator Bcl-2 homolog; this interaction allows the virus to inhibit BECN1, and thus autophagy.</text>
</comment>
<comment type="subcellular location">
    <subcellularLocation>
        <location evidence="1">Cytoplasm</location>
    </subcellularLocation>
    <subcellularLocation>
        <location evidence="2">Golgi apparatus</location>
        <location evidence="2">trans-Golgi network membrane</location>
        <topology evidence="2">Peripheral membrane protein</topology>
    </subcellularLocation>
    <subcellularLocation>
        <location evidence="2">Endosome membrane</location>
        <topology evidence="2">Peripheral membrane protein</topology>
    </subcellularLocation>
    <subcellularLocation>
        <location evidence="2">Endoplasmic reticulum membrane</location>
        <topology evidence="2">Peripheral membrane protein</topology>
    </subcellularLocation>
    <subcellularLocation>
        <location evidence="2">Mitochondrion membrane</location>
        <topology evidence="2">Peripheral membrane protein</topology>
    </subcellularLocation>
    <subcellularLocation>
        <location evidence="7">Cytoplasmic vesicle</location>
        <location evidence="7">Autophagosome</location>
    </subcellularLocation>
    <text evidence="1 2">Interaction with ATG14 promotes translocation to autophagosomes. Expressed in dendrites and cell bodies of cerebellar Purkinje cells.</text>
</comment>
<comment type="subcellular location">
    <molecule>Beclin-1-C 35 kDa</molecule>
    <subcellularLocation>
        <location evidence="1 2">Mitochondrion</location>
    </subcellularLocation>
    <subcellularLocation>
        <location evidence="2">Nucleus</location>
    </subcellularLocation>
    <subcellularLocation>
        <location evidence="2">Cytoplasm</location>
    </subcellularLocation>
</comment>
<comment type="subcellular location">
    <molecule>Beclin-1-C 37 kDa</molecule>
    <subcellularLocation>
        <location evidence="1">Mitochondrion</location>
    </subcellularLocation>
</comment>
<comment type="domain">
    <text evidence="2">The C-terminal evolutionary conserved domain (ECD) contains poly-Gln-binding domains such as the ATXN3 poly-Gln motif, consistent with structural docking models revealing two highly scored poly-Gln-binding pockets in the ECD (By similarity). As some binding is observed with BECN1 lacking the ECD, other domains of BECN1 may also interact with ATXN3 (By similarity).</text>
</comment>
<comment type="PTM">
    <text evidence="1 2">Phosphorylation at Thr-117 by DAPK1 reduces its interaction with BCL2 and BCL2L1 and promotes induction of autophagy. In response to autophagic stimuli, phosphorylated at serine residues by AMPK in an ATG14-dependent manner, and this phosphorylation is critical for maximally efficient autophagy.</text>
</comment>
<comment type="PTM">
    <text evidence="2">Polyubiquitinated by NEDD4, both with 'Lys-11'- and 'Lys-63'-linkages (By similarity). 'Lys-11'-linked polyubiquitination leads to degradation and is enhanced when the stabilizing interaction partner VPS34 is depleted (By similarity). Deubiquitinated by USP10 and USP13, leading to stabilize the PIK3C3/VPS34-containing complexes (By similarity). Polyubiquitinated at Lys-400 with 'Lys-48'-linkages (By similarity). 'Lys-48'-linked polyubiquitination of Lys-400 leads to degradation (By similarity). Deubiquitinated by ATXN3, leading to stabilization (By similarity). Ubiquitinated at Lys-435 via 'Lys-63'-linkage by the DCX(AMBRA1) complex, thereby increasing the association between BECN1 and PIK3C3 to promote PIK3C3 activity (By similarity). 'Lys-48'-linked ubiquitination by RNF216 leads to proteasomal degradation and autophagy inhibition (By similarity).</text>
</comment>
<comment type="PTM">
    <text evidence="1 2">Proteolytically processed by caspases including CASP8 and CASP3; the C-terminal fragments lack autophagy-inducing capacity and are proposed to induce apoptosis. Thus the cleavage is proposed to be an determinant to switch from autophagy to apoptosis pathways affecting cellular homeostasis including viral infections and survival of tumor cells.</text>
</comment>
<comment type="miscellaneous">
    <text evidence="2">Expanded poly-Gln tracts inhibit ATXN3-BECN1 interaction, decrease BECN1 levels and impair starvation-induced autophagy (By similarity).</text>
</comment>
<comment type="similarity">
    <text evidence="7">Belongs to the beclin family.</text>
</comment>
<feature type="chain" id="PRO_0000231036" description="Beclin-1">
    <location>
        <begin position="1"/>
        <end position="448"/>
    </location>
</feature>
<feature type="chain" id="PRO_0000435040" description="Beclin-1-C 37 kDa" evidence="2">
    <location>
        <begin position="132"/>
        <end position="448"/>
    </location>
</feature>
<feature type="chain" id="PRO_0000435041" description="Beclin-1-C 35 kDa" evidence="2">
    <location>
        <begin position="148"/>
        <end position="448"/>
    </location>
</feature>
<feature type="region of interest" description="Interaction with BCL2 and BCL2L1" evidence="2">
    <location>
        <begin position="110"/>
        <end position="157"/>
    </location>
</feature>
<feature type="region of interest" description="Evolutionary conserved domain (ECD)" evidence="2">
    <location>
        <begin position="243"/>
        <end position="448"/>
    </location>
</feature>
<feature type="region of interest" description="Required for membrane-association" evidence="2">
    <location>
        <begin position="423"/>
        <end position="448"/>
    </location>
</feature>
<feature type="coiled-coil region" evidence="4">
    <location>
        <begin position="140"/>
        <end position="267"/>
    </location>
</feature>
<feature type="short sequence motif" description="BH3" evidence="2">
    <location>
        <begin position="106"/>
        <end position="125"/>
    </location>
</feature>
<feature type="modified residue" description="N-acetylmethionine" evidence="2">
    <location>
        <position position="1"/>
    </location>
</feature>
<feature type="modified residue" description="Phosphoserine" evidence="2">
    <location>
        <position position="14"/>
    </location>
</feature>
<feature type="modified residue" description="Phosphoserine" evidence="2">
    <location>
        <position position="29"/>
    </location>
</feature>
<feature type="modified residue" description="Phosphoserine; by AMPK" evidence="2">
    <location>
        <position position="88"/>
    </location>
</feature>
<feature type="modified residue" description="Phosphoserine; by AMPK" evidence="2">
    <location>
        <position position="91"/>
    </location>
</feature>
<feature type="modified residue" description="Phosphoserine; by AMPK" evidence="1">
    <location>
        <position position="94"/>
    </location>
</feature>
<feature type="modified residue" description="Phosphothreonine; by DAPK1" evidence="2">
    <location>
        <position position="117"/>
    </location>
</feature>
<feature type="cross-link" description="Glycyl lysine isopeptide (Lys-Gly) (interchain with G-Cter in ubiquitin)" evidence="2">
    <location>
        <position position="400"/>
    </location>
</feature>
<feature type="cross-link" description="Glycyl lysine isopeptide (Lys-Gly) (interchain with G-Cter in ubiquitin)" evidence="2">
    <location>
        <position position="435"/>
    </location>
</feature>
<feature type="helix" evidence="9">
    <location>
        <begin position="107"/>
        <end position="123"/>
    </location>
</feature>
<proteinExistence type="evidence at protein level"/>
<protein>
    <recommendedName>
        <fullName>Beclin-1</fullName>
    </recommendedName>
    <component>
        <recommendedName>
            <fullName>Beclin-1-C 35 kDa</fullName>
        </recommendedName>
    </component>
    <component>
        <recommendedName>
            <fullName>Beclin-1-C 37 kDa</fullName>
        </recommendedName>
    </component>
</protein>
<sequence>MEGSKTSSSTMQVSFVCQRCSQPLKLDTSFKILDRVTIQELTAPLLATAQVKPGETQEEEANPGEEPFIETRQDGVSRRFIPPARMMSTESANSFTLIGEASDGGTMENLSRRLKVTGDLFDIMSGQTDVDHPLCEECTDTLLDQLDTQLNVTENECQNYKRCLEILEQMHEDDSEQLRMELRELALEEERLIQELEEVEKNRKIVAENLEKVQAEAERLDQEEAQYQREYSEFKRQQLELDDELKSVENQMRYAQMQLDKLKKTNVFNATFHIWHSGQFGTINNFRLGRLPSVPVEWNEINAAWGQTVLLLHALANKMGLKFQRYRLVPYGNHSYLESLTDKSKELPLYCSGGLRFFWDNKFDHAMVAFLDCVQQFKEEVEKGETRFCLPYRMDVEKGKIEDTGGSGGSYSIKTQFNSEEQWTKALKFMLTNLKWGLAWVSSQFYNK</sequence>
<accession>Q4A1L5</accession>
<organism>
    <name type="scientific">Sus scrofa</name>
    <name type="common">Pig</name>
    <dbReference type="NCBI Taxonomy" id="9823"/>
    <lineage>
        <taxon>Eukaryota</taxon>
        <taxon>Metazoa</taxon>
        <taxon>Chordata</taxon>
        <taxon>Craniata</taxon>
        <taxon>Vertebrata</taxon>
        <taxon>Euteleostomi</taxon>
        <taxon>Mammalia</taxon>
        <taxon>Eutheria</taxon>
        <taxon>Laurasiatheria</taxon>
        <taxon>Artiodactyla</taxon>
        <taxon>Suina</taxon>
        <taxon>Suidae</taxon>
        <taxon>Sus</taxon>
    </lineage>
</organism>
<dbReference type="EMBL" id="AM051354">
    <property type="protein sequence ID" value="CAJ19745.1"/>
    <property type="molecule type" value="mRNA"/>
</dbReference>
<dbReference type="RefSeq" id="NP_001037995.1">
    <property type="nucleotide sequence ID" value="NM_001044530.1"/>
</dbReference>
<dbReference type="PDB" id="6TZC">
    <property type="method" value="X-ray"/>
    <property type="resolution" value="2.41 A"/>
    <property type="chains" value="C=103-128"/>
</dbReference>
<dbReference type="PDBsum" id="6TZC"/>
<dbReference type="SMR" id="Q4A1L5"/>
<dbReference type="FunCoup" id="Q4A1L5">
    <property type="interactions" value="1665"/>
</dbReference>
<dbReference type="STRING" id="9823.ENSSSCP00000018420"/>
<dbReference type="PaxDb" id="9823-ENSSSCP00000018420"/>
<dbReference type="PeptideAtlas" id="Q4A1L5"/>
<dbReference type="GeneID" id="733576"/>
<dbReference type="KEGG" id="ssc:733576"/>
<dbReference type="CTD" id="8678"/>
<dbReference type="eggNOG" id="KOG2751">
    <property type="taxonomic scope" value="Eukaryota"/>
</dbReference>
<dbReference type="InParanoid" id="Q4A1L5"/>
<dbReference type="OrthoDB" id="20368at2759"/>
<dbReference type="Proteomes" id="UP000008227">
    <property type="component" value="Unplaced"/>
</dbReference>
<dbReference type="Proteomes" id="UP000314985">
    <property type="component" value="Unplaced"/>
</dbReference>
<dbReference type="Proteomes" id="UP000694570">
    <property type="component" value="Unplaced"/>
</dbReference>
<dbReference type="Proteomes" id="UP000694571">
    <property type="component" value="Unplaced"/>
</dbReference>
<dbReference type="Proteomes" id="UP000694720">
    <property type="component" value="Unplaced"/>
</dbReference>
<dbReference type="Proteomes" id="UP000694722">
    <property type="component" value="Unplaced"/>
</dbReference>
<dbReference type="Proteomes" id="UP000694723">
    <property type="component" value="Unplaced"/>
</dbReference>
<dbReference type="Proteomes" id="UP000694724">
    <property type="component" value="Unplaced"/>
</dbReference>
<dbReference type="Proteomes" id="UP000694725">
    <property type="component" value="Unplaced"/>
</dbReference>
<dbReference type="Proteomes" id="UP000694726">
    <property type="component" value="Unplaced"/>
</dbReference>
<dbReference type="Proteomes" id="UP000694727">
    <property type="component" value="Unplaced"/>
</dbReference>
<dbReference type="Proteomes" id="UP000694728">
    <property type="component" value="Unplaced"/>
</dbReference>
<dbReference type="GO" id="GO:0005776">
    <property type="term" value="C:autophagosome"/>
    <property type="evidence" value="ECO:0007669"/>
    <property type="project" value="UniProtKB-SubCell"/>
</dbReference>
<dbReference type="GO" id="GO:0005789">
    <property type="term" value="C:endoplasmic reticulum membrane"/>
    <property type="evidence" value="ECO:0007669"/>
    <property type="project" value="UniProtKB-SubCell"/>
</dbReference>
<dbReference type="GO" id="GO:0010008">
    <property type="term" value="C:endosome membrane"/>
    <property type="evidence" value="ECO:0007669"/>
    <property type="project" value="UniProtKB-SubCell"/>
</dbReference>
<dbReference type="GO" id="GO:0005794">
    <property type="term" value="C:Golgi apparatus"/>
    <property type="evidence" value="ECO:0007669"/>
    <property type="project" value="UniProtKB-SubCell"/>
</dbReference>
<dbReference type="GO" id="GO:0031966">
    <property type="term" value="C:mitochondrial membrane"/>
    <property type="evidence" value="ECO:0007669"/>
    <property type="project" value="UniProtKB-SubCell"/>
</dbReference>
<dbReference type="GO" id="GO:0005634">
    <property type="term" value="C:nucleus"/>
    <property type="evidence" value="ECO:0007669"/>
    <property type="project" value="UniProtKB-SubCell"/>
</dbReference>
<dbReference type="GO" id="GO:0000407">
    <property type="term" value="C:phagophore assembly site"/>
    <property type="evidence" value="ECO:0000318"/>
    <property type="project" value="GO_Central"/>
</dbReference>
<dbReference type="GO" id="GO:0035032">
    <property type="term" value="C:phosphatidylinositol 3-kinase complex, class III"/>
    <property type="evidence" value="ECO:0000250"/>
    <property type="project" value="UniProtKB"/>
</dbReference>
<dbReference type="GO" id="GO:0034271">
    <property type="term" value="C:phosphatidylinositol 3-kinase complex, class III, type I"/>
    <property type="evidence" value="ECO:0000318"/>
    <property type="project" value="GO_Central"/>
</dbReference>
<dbReference type="GO" id="GO:0034272">
    <property type="term" value="C:phosphatidylinositol 3-kinase complex, class III, type II"/>
    <property type="evidence" value="ECO:0000318"/>
    <property type="project" value="GO_Central"/>
</dbReference>
<dbReference type="GO" id="GO:0043548">
    <property type="term" value="F:phosphatidylinositol 3-kinase binding"/>
    <property type="evidence" value="ECO:0000318"/>
    <property type="project" value="GO_Central"/>
</dbReference>
<dbReference type="GO" id="GO:0030674">
    <property type="term" value="F:protein-macromolecule adaptor activity"/>
    <property type="evidence" value="ECO:0000318"/>
    <property type="project" value="GO_Central"/>
</dbReference>
<dbReference type="GO" id="GO:0006915">
    <property type="term" value="P:apoptotic process"/>
    <property type="evidence" value="ECO:0007669"/>
    <property type="project" value="UniProtKB-KW"/>
</dbReference>
<dbReference type="GO" id="GO:0000045">
    <property type="term" value="P:autophagosome assembly"/>
    <property type="evidence" value="ECO:0000250"/>
    <property type="project" value="UniProtKB"/>
</dbReference>
<dbReference type="GO" id="GO:0006914">
    <property type="term" value="P:autophagy"/>
    <property type="evidence" value="ECO:0000250"/>
    <property type="project" value="UniProtKB"/>
</dbReference>
<dbReference type="GO" id="GO:0051301">
    <property type="term" value="P:cell division"/>
    <property type="evidence" value="ECO:0007669"/>
    <property type="project" value="UniProtKB-KW"/>
</dbReference>
<dbReference type="GO" id="GO:0042149">
    <property type="term" value="P:cellular response to glucose starvation"/>
    <property type="evidence" value="ECO:0000250"/>
    <property type="project" value="UniProtKB"/>
</dbReference>
<dbReference type="GO" id="GO:0006995">
    <property type="term" value="P:cellular response to nitrogen starvation"/>
    <property type="evidence" value="ECO:0000318"/>
    <property type="project" value="GO_Central"/>
</dbReference>
<dbReference type="GO" id="GO:0051607">
    <property type="term" value="P:defense response to virus"/>
    <property type="evidence" value="ECO:0007669"/>
    <property type="project" value="UniProtKB-KW"/>
</dbReference>
<dbReference type="GO" id="GO:0045022">
    <property type="term" value="P:early endosome to late endosome transport"/>
    <property type="evidence" value="ECO:0000250"/>
    <property type="project" value="UniProtKB"/>
</dbReference>
<dbReference type="GO" id="GO:0045324">
    <property type="term" value="P:late endosome to vacuole transport"/>
    <property type="evidence" value="ECO:0000318"/>
    <property type="project" value="GO_Central"/>
</dbReference>
<dbReference type="GO" id="GO:0016236">
    <property type="term" value="P:macroautophagy"/>
    <property type="evidence" value="ECO:0000250"/>
    <property type="project" value="UniProtKB"/>
</dbReference>
<dbReference type="GO" id="GO:0000423">
    <property type="term" value="P:mitophagy"/>
    <property type="evidence" value="ECO:0000318"/>
    <property type="project" value="GO_Central"/>
</dbReference>
<dbReference type="GO" id="GO:0010508">
    <property type="term" value="P:positive regulation of autophagy"/>
    <property type="evidence" value="ECO:0000250"/>
    <property type="project" value="UniProtKB"/>
</dbReference>
<dbReference type="GO" id="GO:0032465">
    <property type="term" value="P:regulation of cytokinesis"/>
    <property type="evidence" value="ECO:0000250"/>
    <property type="project" value="UniProtKB"/>
</dbReference>
<dbReference type="FunFam" id="1.10.418.40:FF:000001">
    <property type="entry name" value="beclin-1 isoform X1"/>
    <property type="match status" value="1"/>
</dbReference>
<dbReference type="Gene3D" id="6.10.250.3110">
    <property type="match status" value="1"/>
</dbReference>
<dbReference type="Gene3D" id="1.10.418.40">
    <property type="entry name" value="Autophagy protein 6/Beclin 1"/>
    <property type="match status" value="1"/>
</dbReference>
<dbReference type="InterPro" id="IPR007243">
    <property type="entry name" value="Atg6/Beclin"/>
</dbReference>
<dbReference type="InterPro" id="IPR038274">
    <property type="entry name" value="Atg6/Beclin_C_sf"/>
</dbReference>
<dbReference type="InterPro" id="IPR041691">
    <property type="entry name" value="Atg6/beclin_CC"/>
</dbReference>
<dbReference type="InterPro" id="IPR040455">
    <property type="entry name" value="Atg6_BARA"/>
</dbReference>
<dbReference type="InterPro" id="IPR029318">
    <property type="entry name" value="BH3_dom"/>
</dbReference>
<dbReference type="PANTHER" id="PTHR12768">
    <property type="entry name" value="BECLIN 1"/>
    <property type="match status" value="1"/>
</dbReference>
<dbReference type="PANTHER" id="PTHR12768:SF6">
    <property type="entry name" value="BECLIN-1"/>
    <property type="match status" value="1"/>
</dbReference>
<dbReference type="Pfam" id="PF04111">
    <property type="entry name" value="APG6"/>
    <property type="match status" value="1"/>
</dbReference>
<dbReference type="Pfam" id="PF17675">
    <property type="entry name" value="APG6_N"/>
    <property type="match status" value="1"/>
</dbReference>
<dbReference type="Pfam" id="PF15285">
    <property type="entry name" value="BH3"/>
    <property type="match status" value="1"/>
</dbReference>
<evidence type="ECO:0000250" key="1">
    <source>
        <dbReference type="UniProtKB" id="O88597"/>
    </source>
</evidence>
<evidence type="ECO:0000250" key="2">
    <source>
        <dbReference type="UniProtKB" id="Q14457"/>
    </source>
</evidence>
<evidence type="ECO:0000250" key="3">
    <source>
        <dbReference type="UniProtKB" id="Q91XJ1"/>
    </source>
</evidence>
<evidence type="ECO:0000255" key="4"/>
<evidence type="ECO:0000269" key="5">
    <source>
    </source>
</evidence>
<evidence type="ECO:0000269" key="6">
    <source>
    </source>
</evidence>
<evidence type="ECO:0000305" key="7"/>
<evidence type="ECO:0007744" key="8">
    <source>
        <dbReference type="PDB" id="6TZC"/>
    </source>
</evidence>
<evidence type="ECO:0007829" key="9">
    <source>
        <dbReference type="PDB" id="6TZC"/>
    </source>
</evidence>
<gene>
    <name type="primary">BECN1</name>
    <name type="synonym">ATG6</name>
</gene>
<reference key="1">
    <citation type="submission" date="2005-07" db="EMBL/GenBank/DDBJ databases">
        <title>Phylogeny and biochemistry of the autophagy protein beclin 1.</title>
        <authorList>
            <person name="Botti J."/>
            <person name="Djavaheri-Mergny M."/>
            <person name="Codogno P."/>
            <person name="Oriol R."/>
        </authorList>
    </citation>
    <scope>NUCLEOTIDE SEQUENCE [MRNA]</scope>
</reference>
<reference key="2">
    <citation type="journal article" date="2013" name="Curr. Mol. Med.">
        <title>A179L, a new viral Bcl2 homolog targeting Beclin 1 autophagy related protein.</title>
        <authorList>
            <person name="Hernaez B."/>
            <person name="Cabezas M."/>
            <person name="Munoz-Moreno R."/>
            <person name="Galindo I."/>
            <person name="Cuesta-Geijo M.A."/>
            <person name="Alonso C."/>
        </authorList>
    </citation>
    <scope>INTERACTION WITH ASFV APOPTOSIS REGULATOR BCL-2 HOMOLOG (MICROBIAL INFECTION)</scope>
</reference>
<reference evidence="8" key="3">
    <citation type="journal article" date="2019" name="Viruses">
        <title>Crystal Structure of African Swine Fever Virus A179L with the Autophagy Regulator Beclin.</title>
        <authorList>
            <person name="Banjara S."/>
            <person name="Shimmon G.L."/>
            <person name="Dixon L.K."/>
            <person name="Netherton C.L."/>
            <person name="Hinds M.G."/>
            <person name="Kvansakul M."/>
        </authorList>
    </citation>
    <scope>X-RAY CRYSTALLOGRAPHY (2.41 ANGSTROMS) OF 103-128</scope>
    <scope>INTERACTION WITH ASFV APOPTOSIS REGULATOR BCL-2 HOMOLOG (MICROBIAL INFECTION)</scope>
</reference>